<dbReference type="EC" id="3.4.24.-" evidence="1"/>
<dbReference type="EMBL" id="LT708304">
    <property type="protein sequence ID" value="SIT99174.1"/>
    <property type="molecule type" value="Genomic_DNA"/>
</dbReference>
<dbReference type="RefSeq" id="NP_854238.1">
    <property type="nucleotide sequence ID" value="NC_002945.3"/>
</dbReference>
<dbReference type="RefSeq" id="WP_003402959.1">
    <property type="nucleotide sequence ID" value="NC_002945.4"/>
</dbReference>
<dbReference type="PATRIC" id="fig|233413.5.peg.626"/>
<dbReference type="Proteomes" id="UP000001419">
    <property type="component" value="Chromosome"/>
</dbReference>
<dbReference type="GO" id="GO:0005886">
    <property type="term" value="C:plasma membrane"/>
    <property type="evidence" value="ECO:0007669"/>
    <property type="project" value="UniProtKB-SubCell"/>
</dbReference>
<dbReference type="GO" id="GO:0004222">
    <property type="term" value="F:metalloendopeptidase activity"/>
    <property type="evidence" value="ECO:0007669"/>
    <property type="project" value="UniProtKB-UniRule"/>
</dbReference>
<dbReference type="GO" id="GO:0008270">
    <property type="term" value="F:zinc ion binding"/>
    <property type="evidence" value="ECO:0007669"/>
    <property type="project" value="UniProtKB-UniRule"/>
</dbReference>
<dbReference type="GO" id="GO:0006508">
    <property type="term" value="P:proteolysis"/>
    <property type="evidence" value="ECO:0007669"/>
    <property type="project" value="UniProtKB-KW"/>
</dbReference>
<dbReference type="CDD" id="cd07336">
    <property type="entry name" value="M48B_HtpX_like"/>
    <property type="match status" value="1"/>
</dbReference>
<dbReference type="FunFam" id="3.30.2010.10:FF:000008">
    <property type="entry name" value="Protease HtpX homolog"/>
    <property type="match status" value="1"/>
</dbReference>
<dbReference type="Gene3D" id="3.30.2010.10">
    <property type="entry name" value="Metalloproteases ('zincins'), catalytic domain"/>
    <property type="match status" value="1"/>
</dbReference>
<dbReference type="HAMAP" id="MF_00188">
    <property type="entry name" value="Pept_M48_protease_HtpX"/>
    <property type="match status" value="1"/>
</dbReference>
<dbReference type="InterPro" id="IPR050083">
    <property type="entry name" value="HtpX_protease"/>
</dbReference>
<dbReference type="InterPro" id="IPR022919">
    <property type="entry name" value="Pept_M48_protease_HtpX"/>
</dbReference>
<dbReference type="InterPro" id="IPR001915">
    <property type="entry name" value="Peptidase_M48"/>
</dbReference>
<dbReference type="NCBIfam" id="NF002839">
    <property type="entry name" value="PRK03072.1"/>
    <property type="match status" value="1"/>
</dbReference>
<dbReference type="PANTHER" id="PTHR43221">
    <property type="entry name" value="PROTEASE HTPX"/>
    <property type="match status" value="1"/>
</dbReference>
<dbReference type="PANTHER" id="PTHR43221:SF1">
    <property type="entry name" value="PROTEASE HTPX"/>
    <property type="match status" value="1"/>
</dbReference>
<dbReference type="Pfam" id="PF01435">
    <property type="entry name" value="Peptidase_M48"/>
    <property type="match status" value="1"/>
</dbReference>
<dbReference type="PROSITE" id="PS00142">
    <property type="entry name" value="ZINC_PROTEASE"/>
    <property type="match status" value="1"/>
</dbReference>
<name>HTPX_MYCBO</name>
<gene>
    <name evidence="1" type="primary">htpX</name>
    <name type="ordered locus">BQ2027_MB0578</name>
</gene>
<comment type="cofactor">
    <cofactor evidence="1">
        <name>Zn(2+)</name>
        <dbReference type="ChEBI" id="CHEBI:29105"/>
    </cofactor>
    <text evidence="1">Binds 1 zinc ion per subunit.</text>
</comment>
<comment type="subcellular location">
    <subcellularLocation>
        <location evidence="1">Cell membrane</location>
        <topology evidence="1">Multi-pass membrane protein</topology>
    </subcellularLocation>
</comment>
<comment type="similarity">
    <text evidence="1">Belongs to the peptidase M48B family.</text>
</comment>
<reference key="1">
    <citation type="journal article" date="2003" name="Proc. Natl. Acad. Sci. U.S.A.">
        <title>The complete genome sequence of Mycobacterium bovis.</title>
        <authorList>
            <person name="Garnier T."/>
            <person name="Eiglmeier K."/>
            <person name="Camus J.-C."/>
            <person name="Medina N."/>
            <person name="Mansoor H."/>
            <person name="Pryor M."/>
            <person name="Duthoy S."/>
            <person name="Grondin S."/>
            <person name="Lacroix C."/>
            <person name="Monsempe C."/>
            <person name="Simon S."/>
            <person name="Harris B."/>
            <person name="Atkin R."/>
            <person name="Doggett J."/>
            <person name="Mayes R."/>
            <person name="Keating L."/>
            <person name="Wheeler P.R."/>
            <person name="Parkhill J."/>
            <person name="Barrell B.G."/>
            <person name="Cole S.T."/>
            <person name="Gordon S.V."/>
            <person name="Hewinson R.G."/>
        </authorList>
    </citation>
    <scope>NUCLEOTIDE SEQUENCE [LARGE SCALE GENOMIC DNA]</scope>
    <source>
        <strain>ATCC BAA-935 / AF2122/97</strain>
    </source>
</reference>
<reference key="2">
    <citation type="journal article" date="2017" name="Genome Announc.">
        <title>Updated reference genome sequence and annotation of Mycobacterium bovis AF2122/97.</title>
        <authorList>
            <person name="Malone K.M."/>
            <person name="Farrell D."/>
            <person name="Stuber T.P."/>
            <person name="Schubert O.T."/>
            <person name="Aebersold R."/>
            <person name="Robbe-Austerman S."/>
            <person name="Gordon S.V."/>
        </authorList>
    </citation>
    <scope>NUCLEOTIDE SEQUENCE [LARGE SCALE GENOMIC DNA]</scope>
    <scope>GENOME REANNOTATION</scope>
    <source>
        <strain>ATCC BAA-935 / AF2122/97</strain>
    </source>
</reference>
<evidence type="ECO:0000255" key="1">
    <source>
        <dbReference type="HAMAP-Rule" id="MF_00188"/>
    </source>
</evidence>
<proteinExistence type="inferred from homology"/>
<feature type="chain" id="PRO_0000138876" description="Protease HtpX homolog">
    <location>
        <begin position="1"/>
        <end position="286"/>
    </location>
</feature>
<feature type="transmembrane region" description="Helical" evidence="1">
    <location>
        <begin position="10"/>
        <end position="30"/>
    </location>
</feature>
<feature type="transmembrane region" description="Helical" evidence="1">
    <location>
        <begin position="33"/>
        <end position="53"/>
    </location>
</feature>
<feature type="transmembrane region" description="Helical" evidence="1">
    <location>
        <begin position="145"/>
        <end position="165"/>
    </location>
</feature>
<feature type="transmembrane region" description="Helical" evidence="1">
    <location>
        <begin position="181"/>
        <end position="201"/>
    </location>
</feature>
<feature type="active site" evidence="1">
    <location>
        <position position="136"/>
    </location>
</feature>
<feature type="binding site" evidence="1">
    <location>
        <position position="135"/>
    </location>
    <ligand>
        <name>Zn(2+)</name>
        <dbReference type="ChEBI" id="CHEBI:29105"/>
        <note>catalytic</note>
    </ligand>
</feature>
<feature type="binding site" evidence="1">
    <location>
        <position position="139"/>
    </location>
    <ligand>
        <name>Zn(2+)</name>
        <dbReference type="ChEBI" id="CHEBI:29105"/>
        <note>catalytic</note>
    </ligand>
</feature>
<feature type="binding site" evidence="1">
    <location>
        <position position="206"/>
    </location>
    <ligand>
        <name>Zn(2+)</name>
        <dbReference type="ChEBI" id="CHEBI:29105"/>
        <note>catalytic</note>
    </ligand>
</feature>
<sequence>MTWHPHANRLKTFLLLVGMSALIVAVGALFGRTALMLAALFAVGMNVYVYFNSDKLALRAMHAQPVSELQAPAMYRIVRELATSAHQPMPRLYISDTAAPNAFATGRNPRNAAVCCTTGILRILNERELRAVLGHELSHVYNRDILISCVAGALAAVITALANMAMWAGMFGGNRDNANPFALLLVALLGPIAATVIRMAVSRSREYQADESGAVLTGDPLALASALRKISGGVQAAPLPPEPQLASQAHLMIANPFRAGERIGSLFSTHPPIEDRIRRLEAMARG</sequence>
<organism>
    <name type="scientific">Mycobacterium bovis (strain ATCC BAA-935 / AF2122/97)</name>
    <dbReference type="NCBI Taxonomy" id="233413"/>
    <lineage>
        <taxon>Bacteria</taxon>
        <taxon>Bacillati</taxon>
        <taxon>Actinomycetota</taxon>
        <taxon>Actinomycetes</taxon>
        <taxon>Mycobacteriales</taxon>
        <taxon>Mycobacteriaceae</taxon>
        <taxon>Mycobacterium</taxon>
        <taxon>Mycobacterium tuberculosis complex</taxon>
    </lineage>
</organism>
<accession>P65816</accession>
<accession>A0A1R3XVU4</accession>
<accession>O06429</accession>
<accession>X2BFE3</accession>
<keyword id="KW-1003">Cell membrane</keyword>
<keyword id="KW-0378">Hydrolase</keyword>
<keyword id="KW-0472">Membrane</keyword>
<keyword id="KW-0479">Metal-binding</keyword>
<keyword id="KW-0482">Metalloprotease</keyword>
<keyword id="KW-0645">Protease</keyword>
<keyword id="KW-1185">Reference proteome</keyword>
<keyword id="KW-0812">Transmembrane</keyword>
<keyword id="KW-1133">Transmembrane helix</keyword>
<keyword id="KW-0862">Zinc</keyword>
<protein>
    <recommendedName>
        <fullName evidence="1">Protease HtpX homolog</fullName>
        <ecNumber evidence="1">3.4.24.-</ecNumber>
    </recommendedName>
</protein>